<name>CC169_MOUSE</name>
<sequence>MGEGHGDTFEGVSTDRLKLELLEEIHMKDVVQLSTLEIRHKIAELEANLNGDLAGSEWKTRYETQLELNDQLEKQIVSLKEKMEKMRGNPSDRLSSIRVYEKMPVESLNVLLKQLEKEKRSLESQVKEYAFRLEQESKAYHRTNNERRSYIAEMTQVSGSNQVSKRQQMDPLPRMKESPVKTGRHNSMNQKTTNAKKGPVKKVPRSNHLPKLNP</sequence>
<keyword id="KW-0025">Alternative splicing</keyword>
<keyword id="KW-0175">Coiled coil</keyword>
<keyword id="KW-1185">Reference proteome</keyword>
<dbReference type="EMBL" id="AK042903">
    <property type="protein sequence ID" value="BAC31401.1"/>
    <property type="molecule type" value="mRNA"/>
</dbReference>
<dbReference type="EMBL" id="AK076919">
    <property type="protein sequence ID" value="BAC36528.2"/>
    <property type="molecule type" value="mRNA"/>
</dbReference>
<dbReference type="EMBL" id="AK160422">
    <property type="protein sequence ID" value="BAE35780.1"/>
    <property type="molecule type" value="mRNA"/>
</dbReference>
<dbReference type="CCDS" id="CCDS17357.2">
    <molecule id="Q8BXX9-1"/>
</dbReference>
<dbReference type="CCDS" id="CCDS79907.1">
    <molecule id="Q8BXX9-2"/>
</dbReference>
<dbReference type="RefSeq" id="NP_001277067.1">
    <molecule id="Q8BXX9-2"/>
    <property type="nucleotide sequence ID" value="NM_001290138.1"/>
</dbReference>
<dbReference type="RefSeq" id="NP_001277070.1">
    <molecule id="Q8BXX9-2"/>
    <property type="nucleotide sequence ID" value="NM_001290141.1"/>
</dbReference>
<dbReference type="RefSeq" id="NP_796177.2">
    <molecule id="Q8BXX9-1"/>
    <property type="nucleotide sequence ID" value="NM_177203.3"/>
</dbReference>
<dbReference type="RefSeq" id="XP_006501638.1">
    <molecule id="Q8BXX9-2"/>
    <property type="nucleotide sequence ID" value="XM_006501575.3"/>
</dbReference>
<dbReference type="RefSeq" id="XP_017175102.1">
    <molecule id="Q8BXX9-2"/>
    <property type="nucleotide sequence ID" value="XM_017319613.2"/>
</dbReference>
<dbReference type="RefSeq" id="XP_017175103.1">
    <molecule id="Q8BXX9-2"/>
    <property type="nucleotide sequence ID" value="XM_017319614.2"/>
</dbReference>
<dbReference type="SMR" id="Q8BXX9"/>
<dbReference type="STRING" id="10090.ENSMUSP00000054771"/>
<dbReference type="iPTMnet" id="Q8BXX9"/>
<dbReference type="PhosphoSitePlus" id="Q8BXX9"/>
<dbReference type="jPOST" id="Q8BXX9"/>
<dbReference type="PaxDb" id="10090-ENSMUSP00000054771"/>
<dbReference type="ProteomicsDB" id="283713">
    <molecule id="Q8BXX9-1"/>
</dbReference>
<dbReference type="ProteomicsDB" id="283714">
    <molecule id="Q8BXX9-2"/>
</dbReference>
<dbReference type="Antibodypedia" id="52943">
    <property type="antibodies" value="15 antibodies from 3 providers"/>
</dbReference>
<dbReference type="Ensembl" id="ENSMUST00000052904.11">
    <molecule id="Q8BXX9-2"/>
    <property type="protein sequence ID" value="ENSMUSP00000049698.5"/>
    <property type="gene ID" value="ENSMUSG00000048655.18"/>
</dbReference>
<dbReference type="Ensembl" id="ENSMUST00000061099.14">
    <molecule id="Q8BXX9-1"/>
    <property type="protein sequence ID" value="ENSMUSP00000054771.8"/>
    <property type="gene ID" value="ENSMUSG00000048655.18"/>
</dbReference>
<dbReference type="GeneID" id="320604"/>
<dbReference type="KEGG" id="mmu:320604"/>
<dbReference type="UCSC" id="uc008pgg.3">
    <molecule id="Q8BXX9-1"/>
    <property type="organism name" value="mouse"/>
</dbReference>
<dbReference type="UCSC" id="uc012cpo.2">
    <molecule id="Q8BXX9-2"/>
    <property type="organism name" value="mouse"/>
</dbReference>
<dbReference type="AGR" id="MGI:2444356"/>
<dbReference type="CTD" id="728591"/>
<dbReference type="MGI" id="MGI:2444356">
    <property type="gene designation" value="Ccdc169"/>
</dbReference>
<dbReference type="VEuPathDB" id="HostDB:ENSMUSG00000048655"/>
<dbReference type="eggNOG" id="ENOG502S1I0">
    <property type="taxonomic scope" value="Eukaryota"/>
</dbReference>
<dbReference type="GeneTree" id="ENSGT00390000011174"/>
<dbReference type="HOGENOM" id="CLU_158060_0_0_1"/>
<dbReference type="InParanoid" id="Q8BXX9"/>
<dbReference type="OMA" id="MPVGSLN"/>
<dbReference type="OrthoDB" id="6615663at2759"/>
<dbReference type="PhylomeDB" id="Q8BXX9"/>
<dbReference type="TreeFam" id="TF329642"/>
<dbReference type="BioGRID-ORCS" id="320604">
    <property type="hits" value="5 hits in 72 CRISPR screens"/>
</dbReference>
<dbReference type="PRO" id="PR:Q8BXX9"/>
<dbReference type="Proteomes" id="UP000000589">
    <property type="component" value="Chromosome 3"/>
</dbReference>
<dbReference type="RNAct" id="Q8BXX9">
    <property type="molecule type" value="protein"/>
</dbReference>
<dbReference type="Bgee" id="ENSMUSG00000048655">
    <property type="expression patterns" value="Expressed in spermatid and 20 other cell types or tissues"/>
</dbReference>
<dbReference type="ExpressionAtlas" id="Q8BXX9">
    <property type="expression patterns" value="baseline and differential"/>
</dbReference>
<dbReference type="InterPro" id="IPR028022">
    <property type="entry name" value="DUF4600"/>
</dbReference>
<dbReference type="PANTHER" id="PTHR28671">
    <property type="entry name" value="COILED-COIL DOMAIN-CONTAINING PROTEIN 169"/>
    <property type="match status" value="1"/>
</dbReference>
<dbReference type="PANTHER" id="PTHR28671:SF3">
    <property type="entry name" value="COILED-COIL DOMAIN-CONTAINING PROTEIN 169"/>
    <property type="match status" value="1"/>
</dbReference>
<dbReference type="Pfam" id="PF15372">
    <property type="entry name" value="DUF4600"/>
    <property type="match status" value="1"/>
</dbReference>
<gene>
    <name type="primary">Ccdc169</name>
</gene>
<proteinExistence type="evidence at transcript level"/>
<protein>
    <recommendedName>
        <fullName>Coiled-coil domain-containing protein 169</fullName>
    </recommendedName>
</protein>
<feature type="chain" id="PRO_0000341367" description="Coiled-coil domain-containing protein 169">
    <location>
        <begin position="1"/>
        <end position="214"/>
    </location>
</feature>
<feature type="region of interest" description="Disordered" evidence="2">
    <location>
        <begin position="154"/>
        <end position="214"/>
    </location>
</feature>
<feature type="coiled-coil region" evidence="1">
    <location>
        <begin position="56"/>
        <end position="138"/>
    </location>
</feature>
<feature type="compositionally biased region" description="Polar residues" evidence="2">
    <location>
        <begin position="155"/>
        <end position="166"/>
    </location>
</feature>
<feature type="compositionally biased region" description="Polar residues" evidence="2">
    <location>
        <begin position="185"/>
        <end position="195"/>
    </location>
</feature>
<feature type="splice variant" id="VSP_035638" description="In isoform 2." evidence="3">
    <location>
        <begin position="1"/>
        <end position="82"/>
    </location>
</feature>
<organism>
    <name type="scientific">Mus musculus</name>
    <name type="common">Mouse</name>
    <dbReference type="NCBI Taxonomy" id="10090"/>
    <lineage>
        <taxon>Eukaryota</taxon>
        <taxon>Metazoa</taxon>
        <taxon>Chordata</taxon>
        <taxon>Craniata</taxon>
        <taxon>Vertebrata</taxon>
        <taxon>Euteleostomi</taxon>
        <taxon>Mammalia</taxon>
        <taxon>Eutheria</taxon>
        <taxon>Euarchontoglires</taxon>
        <taxon>Glires</taxon>
        <taxon>Rodentia</taxon>
        <taxon>Myomorpha</taxon>
        <taxon>Muroidea</taxon>
        <taxon>Muridae</taxon>
        <taxon>Murinae</taxon>
        <taxon>Mus</taxon>
        <taxon>Mus</taxon>
    </lineage>
</organism>
<evidence type="ECO:0000255" key="1"/>
<evidence type="ECO:0000256" key="2">
    <source>
        <dbReference type="SAM" id="MobiDB-lite"/>
    </source>
</evidence>
<evidence type="ECO:0000303" key="3">
    <source>
    </source>
</evidence>
<evidence type="ECO:0000305" key="4"/>
<accession>Q8BXX9</accession>
<accession>Q8BVQ6</accession>
<reference key="1">
    <citation type="journal article" date="2005" name="Science">
        <title>The transcriptional landscape of the mammalian genome.</title>
        <authorList>
            <person name="Carninci P."/>
            <person name="Kasukawa T."/>
            <person name="Katayama S."/>
            <person name="Gough J."/>
            <person name="Frith M.C."/>
            <person name="Maeda N."/>
            <person name="Oyama R."/>
            <person name="Ravasi T."/>
            <person name="Lenhard B."/>
            <person name="Wells C."/>
            <person name="Kodzius R."/>
            <person name="Shimokawa K."/>
            <person name="Bajic V.B."/>
            <person name="Brenner S.E."/>
            <person name="Batalov S."/>
            <person name="Forrest A.R."/>
            <person name="Zavolan M."/>
            <person name="Davis M.J."/>
            <person name="Wilming L.G."/>
            <person name="Aidinis V."/>
            <person name="Allen J.E."/>
            <person name="Ambesi-Impiombato A."/>
            <person name="Apweiler R."/>
            <person name="Aturaliya R.N."/>
            <person name="Bailey T.L."/>
            <person name="Bansal M."/>
            <person name="Baxter L."/>
            <person name="Beisel K.W."/>
            <person name="Bersano T."/>
            <person name="Bono H."/>
            <person name="Chalk A.M."/>
            <person name="Chiu K.P."/>
            <person name="Choudhary V."/>
            <person name="Christoffels A."/>
            <person name="Clutterbuck D.R."/>
            <person name="Crowe M.L."/>
            <person name="Dalla E."/>
            <person name="Dalrymple B.P."/>
            <person name="de Bono B."/>
            <person name="Della Gatta G."/>
            <person name="di Bernardo D."/>
            <person name="Down T."/>
            <person name="Engstrom P."/>
            <person name="Fagiolini M."/>
            <person name="Faulkner G."/>
            <person name="Fletcher C.F."/>
            <person name="Fukushima T."/>
            <person name="Furuno M."/>
            <person name="Futaki S."/>
            <person name="Gariboldi M."/>
            <person name="Georgii-Hemming P."/>
            <person name="Gingeras T.R."/>
            <person name="Gojobori T."/>
            <person name="Green R.E."/>
            <person name="Gustincich S."/>
            <person name="Harbers M."/>
            <person name="Hayashi Y."/>
            <person name="Hensch T.K."/>
            <person name="Hirokawa N."/>
            <person name="Hill D."/>
            <person name="Huminiecki L."/>
            <person name="Iacono M."/>
            <person name="Ikeo K."/>
            <person name="Iwama A."/>
            <person name="Ishikawa T."/>
            <person name="Jakt M."/>
            <person name="Kanapin A."/>
            <person name="Katoh M."/>
            <person name="Kawasawa Y."/>
            <person name="Kelso J."/>
            <person name="Kitamura H."/>
            <person name="Kitano H."/>
            <person name="Kollias G."/>
            <person name="Krishnan S.P."/>
            <person name="Kruger A."/>
            <person name="Kummerfeld S.K."/>
            <person name="Kurochkin I.V."/>
            <person name="Lareau L.F."/>
            <person name="Lazarevic D."/>
            <person name="Lipovich L."/>
            <person name="Liu J."/>
            <person name="Liuni S."/>
            <person name="McWilliam S."/>
            <person name="Madan Babu M."/>
            <person name="Madera M."/>
            <person name="Marchionni L."/>
            <person name="Matsuda H."/>
            <person name="Matsuzawa S."/>
            <person name="Miki H."/>
            <person name="Mignone F."/>
            <person name="Miyake S."/>
            <person name="Morris K."/>
            <person name="Mottagui-Tabar S."/>
            <person name="Mulder N."/>
            <person name="Nakano N."/>
            <person name="Nakauchi H."/>
            <person name="Ng P."/>
            <person name="Nilsson R."/>
            <person name="Nishiguchi S."/>
            <person name="Nishikawa S."/>
            <person name="Nori F."/>
            <person name="Ohara O."/>
            <person name="Okazaki Y."/>
            <person name="Orlando V."/>
            <person name="Pang K.C."/>
            <person name="Pavan W.J."/>
            <person name="Pavesi G."/>
            <person name="Pesole G."/>
            <person name="Petrovsky N."/>
            <person name="Piazza S."/>
            <person name="Reed J."/>
            <person name="Reid J.F."/>
            <person name="Ring B.Z."/>
            <person name="Ringwald M."/>
            <person name="Rost B."/>
            <person name="Ruan Y."/>
            <person name="Salzberg S.L."/>
            <person name="Sandelin A."/>
            <person name="Schneider C."/>
            <person name="Schoenbach C."/>
            <person name="Sekiguchi K."/>
            <person name="Semple C.A."/>
            <person name="Seno S."/>
            <person name="Sessa L."/>
            <person name="Sheng Y."/>
            <person name="Shibata Y."/>
            <person name="Shimada H."/>
            <person name="Shimada K."/>
            <person name="Silva D."/>
            <person name="Sinclair B."/>
            <person name="Sperling S."/>
            <person name="Stupka E."/>
            <person name="Sugiura K."/>
            <person name="Sultana R."/>
            <person name="Takenaka Y."/>
            <person name="Taki K."/>
            <person name="Tammoja K."/>
            <person name="Tan S.L."/>
            <person name="Tang S."/>
            <person name="Taylor M.S."/>
            <person name="Tegner J."/>
            <person name="Teichmann S.A."/>
            <person name="Ueda H.R."/>
            <person name="van Nimwegen E."/>
            <person name="Verardo R."/>
            <person name="Wei C.L."/>
            <person name="Yagi K."/>
            <person name="Yamanishi H."/>
            <person name="Zabarovsky E."/>
            <person name="Zhu S."/>
            <person name="Zimmer A."/>
            <person name="Hide W."/>
            <person name="Bult C."/>
            <person name="Grimmond S.M."/>
            <person name="Teasdale R.D."/>
            <person name="Liu E.T."/>
            <person name="Brusic V."/>
            <person name="Quackenbush J."/>
            <person name="Wahlestedt C."/>
            <person name="Mattick J.S."/>
            <person name="Hume D.A."/>
            <person name="Kai C."/>
            <person name="Sasaki D."/>
            <person name="Tomaru Y."/>
            <person name="Fukuda S."/>
            <person name="Kanamori-Katayama M."/>
            <person name="Suzuki M."/>
            <person name="Aoki J."/>
            <person name="Arakawa T."/>
            <person name="Iida J."/>
            <person name="Imamura K."/>
            <person name="Itoh M."/>
            <person name="Kato T."/>
            <person name="Kawaji H."/>
            <person name="Kawagashira N."/>
            <person name="Kawashima T."/>
            <person name="Kojima M."/>
            <person name="Kondo S."/>
            <person name="Konno H."/>
            <person name="Nakano K."/>
            <person name="Ninomiya N."/>
            <person name="Nishio T."/>
            <person name="Okada M."/>
            <person name="Plessy C."/>
            <person name="Shibata K."/>
            <person name="Shiraki T."/>
            <person name="Suzuki S."/>
            <person name="Tagami M."/>
            <person name="Waki K."/>
            <person name="Watahiki A."/>
            <person name="Okamura-Oho Y."/>
            <person name="Suzuki H."/>
            <person name="Kawai J."/>
            <person name="Hayashizaki Y."/>
        </authorList>
    </citation>
    <scope>NUCLEOTIDE SEQUENCE [LARGE SCALE MRNA] (ISOFORMS 1 AND 2)</scope>
    <source>
        <strain>C57BL/6J</strain>
        <tissue>Cerebellum</tissue>
        <tissue>Testis</tissue>
    </source>
</reference>
<comment type="alternative products">
    <event type="alternative splicing"/>
    <isoform>
        <id>Q8BXX9-1</id>
        <name>1</name>
        <sequence type="displayed"/>
    </isoform>
    <isoform>
        <id>Q8BXX9-2</id>
        <name>2</name>
        <sequence type="described" ref="VSP_035638"/>
    </isoform>
</comment>
<comment type="similarity">
    <text evidence="4">Belongs to the CCDC169 family.</text>
</comment>